<dbReference type="EMBL" id="CP000243">
    <property type="protein sequence ID" value="ABE08949.1"/>
    <property type="molecule type" value="Genomic_DNA"/>
</dbReference>
<dbReference type="RefSeq" id="WP_001144069.1">
    <property type="nucleotide sequence ID" value="NZ_CP064825.1"/>
</dbReference>
<dbReference type="SMR" id="Q1R6R5"/>
<dbReference type="GeneID" id="98390195"/>
<dbReference type="KEGG" id="eci:UTI89_C3502"/>
<dbReference type="HOGENOM" id="CLU_159258_1_0_6"/>
<dbReference type="Proteomes" id="UP000001952">
    <property type="component" value="Chromosome"/>
</dbReference>
<dbReference type="GO" id="GO:1990904">
    <property type="term" value="C:ribonucleoprotein complex"/>
    <property type="evidence" value="ECO:0007669"/>
    <property type="project" value="UniProtKB-KW"/>
</dbReference>
<dbReference type="GO" id="GO:0005840">
    <property type="term" value="C:ribosome"/>
    <property type="evidence" value="ECO:0007669"/>
    <property type="project" value="UniProtKB-KW"/>
</dbReference>
<dbReference type="GO" id="GO:0003735">
    <property type="term" value="F:structural constituent of ribosome"/>
    <property type="evidence" value="ECO:0007669"/>
    <property type="project" value="InterPro"/>
</dbReference>
<dbReference type="GO" id="GO:0006412">
    <property type="term" value="P:translation"/>
    <property type="evidence" value="ECO:0007669"/>
    <property type="project" value="UniProtKB-UniRule"/>
</dbReference>
<dbReference type="FunFam" id="1.20.5.1150:FF:000001">
    <property type="entry name" value="30S ribosomal protein S21"/>
    <property type="match status" value="1"/>
</dbReference>
<dbReference type="Gene3D" id="1.20.5.1150">
    <property type="entry name" value="Ribosomal protein S8"/>
    <property type="match status" value="1"/>
</dbReference>
<dbReference type="HAMAP" id="MF_00358">
    <property type="entry name" value="Ribosomal_bS21"/>
    <property type="match status" value="1"/>
</dbReference>
<dbReference type="InterPro" id="IPR001911">
    <property type="entry name" value="Ribosomal_bS21"/>
</dbReference>
<dbReference type="InterPro" id="IPR018278">
    <property type="entry name" value="Ribosomal_bS21_CS"/>
</dbReference>
<dbReference type="InterPro" id="IPR038380">
    <property type="entry name" value="Ribosomal_bS21_sf"/>
</dbReference>
<dbReference type="NCBIfam" id="TIGR00030">
    <property type="entry name" value="S21p"/>
    <property type="match status" value="1"/>
</dbReference>
<dbReference type="PANTHER" id="PTHR21109">
    <property type="entry name" value="MITOCHONDRIAL 28S RIBOSOMAL PROTEIN S21"/>
    <property type="match status" value="1"/>
</dbReference>
<dbReference type="PANTHER" id="PTHR21109:SF22">
    <property type="entry name" value="SMALL RIBOSOMAL SUBUNIT PROTEIN BS21"/>
    <property type="match status" value="1"/>
</dbReference>
<dbReference type="Pfam" id="PF01165">
    <property type="entry name" value="Ribosomal_S21"/>
    <property type="match status" value="1"/>
</dbReference>
<dbReference type="PRINTS" id="PR00976">
    <property type="entry name" value="RIBOSOMALS21"/>
</dbReference>
<dbReference type="PROSITE" id="PS01181">
    <property type="entry name" value="RIBOSOMAL_S21"/>
    <property type="match status" value="1"/>
</dbReference>
<feature type="initiator methionine" description="Removed" evidence="1">
    <location>
        <position position="1"/>
    </location>
</feature>
<feature type="chain" id="PRO_0000266666" description="Small ribosomal subunit protein bS21">
    <location>
        <begin position="2"/>
        <end position="71"/>
    </location>
</feature>
<feature type="region of interest" description="Disordered" evidence="3">
    <location>
        <begin position="43"/>
        <end position="71"/>
    </location>
</feature>
<feature type="compositionally biased region" description="Basic residues" evidence="3">
    <location>
        <begin position="46"/>
        <end position="59"/>
    </location>
</feature>
<feature type="compositionally biased region" description="Basic and acidic residues" evidence="3">
    <location>
        <begin position="60"/>
        <end position="71"/>
    </location>
</feature>
<organism>
    <name type="scientific">Escherichia coli (strain UTI89 / UPEC)</name>
    <dbReference type="NCBI Taxonomy" id="364106"/>
    <lineage>
        <taxon>Bacteria</taxon>
        <taxon>Pseudomonadati</taxon>
        <taxon>Pseudomonadota</taxon>
        <taxon>Gammaproteobacteria</taxon>
        <taxon>Enterobacterales</taxon>
        <taxon>Enterobacteriaceae</taxon>
        <taxon>Escherichia</taxon>
    </lineage>
</organism>
<accession>Q1R6R5</accession>
<reference key="1">
    <citation type="journal article" date="2006" name="Proc. Natl. Acad. Sci. U.S.A.">
        <title>Identification of genes subject to positive selection in uropathogenic strains of Escherichia coli: a comparative genomics approach.</title>
        <authorList>
            <person name="Chen S.L."/>
            <person name="Hung C.-S."/>
            <person name="Xu J."/>
            <person name="Reigstad C.S."/>
            <person name="Magrini V."/>
            <person name="Sabo A."/>
            <person name="Blasiar D."/>
            <person name="Bieri T."/>
            <person name="Meyer R.R."/>
            <person name="Ozersky P."/>
            <person name="Armstrong J.R."/>
            <person name="Fulton R.S."/>
            <person name="Latreille J.P."/>
            <person name="Spieth J."/>
            <person name="Hooton T.M."/>
            <person name="Mardis E.R."/>
            <person name="Hultgren S.J."/>
            <person name="Gordon J.I."/>
        </authorList>
    </citation>
    <scope>NUCLEOTIDE SEQUENCE [LARGE SCALE GENOMIC DNA]</scope>
    <source>
        <strain>UTI89 / UPEC</strain>
    </source>
</reference>
<comment type="similarity">
    <text evidence="2">Belongs to the bacterial ribosomal protein bS21 family.</text>
</comment>
<name>RS21_ECOUT</name>
<evidence type="ECO:0000250" key="1"/>
<evidence type="ECO:0000255" key="2">
    <source>
        <dbReference type="HAMAP-Rule" id="MF_00358"/>
    </source>
</evidence>
<evidence type="ECO:0000256" key="3">
    <source>
        <dbReference type="SAM" id="MobiDB-lite"/>
    </source>
</evidence>
<evidence type="ECO:0000305" key="4"/>
<gene>
    <name evidence="2" type="primary">rpsU</name>
    <name type="ordered locus">UTI89_C3502</name>
</gene>
<sequence length="71" mass="8500">MPVIKVRENEPFDVALRRFKRSCEKAGVLAEVRRREFYEKPTTERKRAKASAVKRHAKKLARENARRTRLY</sequence>
<keyword id="KW-0687">Ribonucleoprotein</keyword>
<keyword id="KW-0689">Ribosomal protein</keyword>
<protein>
    <recommendedName>
        <fullName evidence="2">Small ribosomal subunit protein bS21</fullName>
    </recommendedName>
    <alternativeName>
        <fullName evidence="4">30S ribosomal protein S21</fullName>
    </alternativeName>
</protein>
<proteinExistence type="inferred from homology"/>